<feature type="chain" id="PRO_0000420685" description="Germ cell-specific gene 1-like protein">
    <location>
        <begin position="1"/>
        <end position="322"/>
    </location>
</feature>
<feature type="topological domain" description="Cytoplasmic" evidence="2">
    <location>
        <begin position="1"/>
        <end position="8"/>
    </location>
</feature>
<feature type="transmembrane region" description="Helical" evidence="2">
    <location>
        <begin position="9"/>
        <end position="29"/>
    </location>
</feature>
<feature type="topological domain" description="Extracellular" evidence="2">
    <location>
        <begin position="30"/>
        <end position="122"/>
    </location>
</feature>
<feature type="transmembrane region" description="Helical" evidence="2">
    <location>
        <begin position="123"/>
        <end position="143"/>
    </location>
</feature>
<feature type="topological domain" description="Cytoplasmic" evidence="2">
    <location>
        <begin position="144"/>
        <end position="163"/>
    </location>
</feature>
<feature type="transmembrane region" description="Helical" evidence="2">
    <location>
        <begin position="164"/>
        <end position="184"/>
    </location>
</feature>
<feature type="topological domain" description="Extracellular" evidence="2">
    <location>
        <begin position="185"/>
        <end position="207"/>
    </location>
</feature>
<feature type="transmembrane region" description="Helical" evidence="2">
    <location>
        <begin position="208"/>
        <end position="228"/>
    </location>
</feature>
<feature type="topological domain" description="Cytoplasmic" evidence="2">
    <location>
        <begin position="229"/>
        <end position="322"/>
    </location>
</feature>
<feature type="modified residue" description="Phosphoserine" evidence="5">
    <location>
        <position position="274"/>
    </location>
</feature>
<sequence>MKTSRRGRALLAVALNLLALLFATTAFLTTYWCQGTQRVPKPGCGQGGGANCPNSGANATANSTAAPVAASPAGAPYSWEAGDERFQLRRFHTGIWYSCEEELGGPGEKCRSFIDLAPASEKGVLWLSVVSEVLYILLLVVGFSLMCLELLHSSSVIDGLKLNAFAAVFTVLSGLLGMVAHMMYTQVFQVTVSLGPEDWRPHSWDYGWSFCLAWGSFTCCMAASVTTLNSYTKTVIEFRHKRKVFEQGYREEPTFIDPEAIKYFRERIEKGDVSEEEDFRLACRHERYPTRHQPHMGDSWPRSSAHEAAELNRQCWVLGHWV</sequence>
<accession>D3ZK93</accession>
<protein>
    <recommendedName>
        <fullName>Germ cell-specific gene 1-like protein</fullName>
        <shortName>GSG1-like protein</shortName>
    </recommendedName>
</protein>
<organism>
    <name type="scientific">Rattus norvegicus</name>
    <name type="common">Rat</name>
    <dbReference type="NCBI Taxonomy" id="10116"/>
    <lineage>
        <taxon>Eukaryota</taxon>
        <taxon>Metazoa</taxon>
        <taxon>Chordata</taxon>
        <taxon>Craniata</taxon>
        <taxon>Vertebrata</taxon>
        <taxon>Euteleostomi</taxon>
        <taxon>Mammalia</taxon>
        <taxon>Eutheria</taxon>
        <taxon>Euarchontoglires</taxon>
        <taxon>Glires</taxon>
        <taxon>Rodentia</taxon>
        <taxon>Myomorpha</taxon>
        <taxon>Muroidea</taxon>
        <taxon>Muridae</taxon>
        <taxon>Murinae</taxon>
        <taxon>Rattus</taxon>
    </lineage>
</organism>
<keyword id="KW-0002">3D-structure</keyword>
<keyword id="KW-1003">Cell membrane</keyword>
<keyword id="KW-0472">Membrane</keyword>
<keyword id="KW-0597">Phosphoprotein</keyword>
<keyword id="KW-1185">Reference proteome</keyword>
<keyword id="KW-0770">Synapse</keyword>
<keyword id="KW-0812">Transmembrane</keyword>
<keyword id="KW-1133">Transmembrane helix</keyword>
<comment type="function">
    <text evidence="3">As a component of the inner core of AMPAR complexes, modifies AMPA receptor (AMPAR) gating.</text>
</comment>
<comment type="subunit">
    <text evidence="3">Component of the inner core of AMPAR complexes. AMPAR complexes consist of an inner core made of 4 pore-forming GluA/GRIA proteins (GRIA1, GRIA2, GRIA3 and GRIA4) and 4 major auxiliary subunits arranged in a twofold symmetry. One of the two pairs of distinct binding sites is occupied either by CNIH2, CNIH3 or CACNG2, CACNG3. The other harbors CACNG2, CACNG3, CACNG4, CACNG8 or GSG1L. This inner core of AMPAR complexes is complemented by outer core constituents binding directly to the GluA/GRIA proteins at sites distinct from the interaction sites of the inner core constituents. Outer core constituents include at least PRRT1, PRRT2, CKAMP44/SHISA9, FRRS1L and NRN1. The proteins of the inner and outer core serve as a platform for other, more peripherally associated AMPAR constituents. Alone or in combination, these auxiliary subunits control the gating and pharmacology of the AMPAR complexes and profoundly impact their biogenesis and protein processing.</text>
</comment>
<comment type="subcellular location">
    <subcellularLocation>
        <location evidence="3">Cell membrane</location>
        <topology evidence="3">Multi-pass membrane protein</topology>
    </subcellularLocation>
    <subcellularLocation>
        <location evidence="1">Synapse</location>
    </subcellularLocation>
</comment>
<comment type="tissue specificity">
    <text evidence="3">Expressed in the brain (at protein level).</text>
</comment>
<comment type="similarity">
    <text evidence="4">Belongs to the GSG1 family.</text>
</comment>
<dbReference type="RefSeq" id="NP_001406591.1">
    <property type="nucleotide sequence ID" value="NM_001419662.1"/>
</dbReference>
<dbReference type="PDB" id="5VHW">
    <property type="method" value="EM"/>
    <property type="resolution" value="7.80 A"/>
    <property type="chains" value="A/B/C/D=2-238"/>
</dbReference>
<dbReference type="PDB" id="5VHX">
    <property type="method" value="EM"/>
    <property type="resolution" value="8.30 A"/>
    <property type="chains" value="A/B/C/D/E=2-238"/>
</dbReference>
<dbReference type="PDB" id="5VHY">
    <property type="method" value="EM"/>
    <property type="resolution" value="4.60 A"/>
    <property type="chains" value="A/B/C/D/E/F=2-238"/>
</dbReference>
<dbReference type="PDB" id="5VHZ">
    <property type="method" value="EM"/>
    <property type="resolution" value="8.40 A"/>
    <property type="chains" value="A/B/C/D/E/F=2-238"/>
</dbReference>
<dbReference type="PDBsum" id="5VHW"/>
<dbReference type="PDBsum" id="5VHX"/>
<dbReference type="PDBsum" id="5VHY"/>
<dbReference type="PDBsum" id="5VHZ"/>
<dbReference type="EMDB" id="EMD-8685"/>
<dbReference type="EMDB" id="EMD-8686"/>
<dbReference type="EMDB" id="EMD-8687"/>
<dbReference type="EMDB" id="EMD-8688"/>
<dbReference type="SMR" id="D3ZK93"/>
<dbReference type="CORUM" id="D3ZK93"/>
<dbReference type="FunCoup" id="D3ZK93">
    <property type="interactions" value="236"/>
</dbReference>
<dbReference type="iPTMnet" id="D3ZK93"/>
<dbReference type="PhosphoSitePlus" id="D3ZK93"/>
<dbReference type="PaxDb" id="10116-ENSRNOP00000022392"/>
<dbReference type="Ensembl" id="ENSRNOT00000108837.1">
    <property type="protein sequence ID" value="ENSRNOP00000081015.1"/>
    <property type="gene ID" value="ENSRNOG00000065255.1"/>
</dbReference>
<dbReference type="GeneID" id="499263"/>
<dbReference type="UCSC" id="RGD:1562278">
    <property type="organism name" value="rat"/>
</dbReference>
<dbReference type="AGR" id="RGD:1562278"/>
<dbReference type="RGD" id="1562278">
    <property type="gene designation" value="Gsg1l"/>
</dbReference>
<dbReference type="eggNOG" id="ENOG502QRSH">
    <property type="taxonomic scope" value="Eukaryota"/>
</dbReference>
<dbReference type="GeneTree" id="ENSGT01050000244814"/>
<dbReference type="InParanoid" id="D3ZK93"/>
<dbReference type="OMA" id="FRLACRH"/>
<dbReference type="OrthoDB" id="10001768at2759"/>
<dbReference type="PhylomeDB" id="D3ZK93"/>
<dbReference type="TreeFam" id="TF331388"/>
<dbReference type="PRO" id="PR:D3ZK93"/>
<dbReference type="Proteomes" id="UP000002494">
    <property type="component" value="Chromosome 1"/>
</dbReference>
<dbReference type="GO" id="GO:0032279">
    <property type="term" value="C:asymmetric synapse"/>
    <property type="evidence" value="ECO:0000266"/>
    <property type="project" value="RGD"/>
</dbReference>
<dbReference type="GO" id="GO:0098978">
    <property type="term" value="C:glutamatergic synapse"/>
    <property type="evidence" value="ECO:0000314"/>
    <property type="project" value="SynGO"/>
</dbReference>
<dbReference type="GO" id="GO:0005886">
    <property type="term" value="C:plasma membrane"/>
    <property type="evidence" value="ECO:0000318"/>
    <property type="project" value="GO_Central"/>
</dbReference>
<dbReference type="GO" id="GO:0098839">
    <property type="term" value="C:postsynaptic density membrane"/>
    <property type="evidence" value="ECO:0000314"/>
    <property type="project" value="SynGO"/>
</dbReference>
<dbReference type="GO" id="GO:0098685">
    <property type="term" value="C:Schaffer collateral - CA1 synapse"/>
    <property type="evidence" value="ECO:0000266"/>
    <property type="project" value="RGD"/>
</dbReference>
<dbReference type="GO" id="GO:2000311">
    <property type="term" value="P:regulation of AMPA receptor activity"/>
    <property type="evidence" value="ECO:0000314"/>
    <property type="project" value="MGI"/>
</dbReference>
<dbReference type="GO" id="GO:0099149">
    <property type="term" value="P:regulation of postsynaptic neurotransmitter receptor internalization"/>
    <property type="evidence" value="ECO:0000266"/>
    <property type="project" value="RGD"/>
</dbReference>
<dbReference type="GO" id="GO:0048172">
    <property type="term" value="P:regulation of short-term neuronal synaptic plasticity"/>
    <property type="evidence" value="ECO:0007669"/>
    <property type="project" value="Ensembl"/>
</dbReference>
<dbReference type="GO" id="GO:0050808">
    <property type="term" value="P:synapse organization"/>
    <property type="evidence" value="ECO:0007669"/>
    <property type="project" value="Ensembl"/>
</dbReference>
<dbReference type="GO" id="GO:0019226">
    <property type="term" value="P:transmission of nerve impulse"/>
    <property type="evidence" value="ECO:0007669"/>
    <property type="project" value="Ensembl"/>
</dbReference>
<dbReference type="FunFam" id="1.20.140.150:FF:000005">
    <property type="entry name" value="Germ cell-specific gene 1-like"/>
    <property type="match status" value="1"/>
</dbReference>
<dbReference type="Gene3D" id="1.20.140.150">
    <property type="match status" value="1"/>
</dbReference>
<dbReference type="InterPro" id="IPR012478">
    <property type="entry name" value="GSG-1"/>
</dbReference>
<dbReference type="InterPro" id="IPR050579">
    <property type="entry name" value="PMP-22/EMP/MP20-like"/>
</dbReference>
<dbReference type="PANTHER" id="PTHR10671">
    <property type="entry name" value="EPITHELIAL MEMBRANE PROTEIN-RELATED"/>
    <property type="match status" value="1"/>
</dbReference>
<dbReference type="PANTHER" id="PTHR10671:SF35">
    <property type="entry name" value="GERM CELL-SPECIFIC GENE 1-LIKE PROTEIN"/>
    <property type="match status" value="1"/>
</dbReference>
<dbReference type="Pfam" id="PF07803">
    <property type="entry name" value="GSG-1"/>
    <property type="match status" value="1"/>
</dbReference>
<gene>
    <name type="primary">Gsg1l</name>
</gene>
<name>GSG1L_RAT</name>
<evidence type="ECO:0000250" key="1"/>
<evidence type="ECO:0000255" key="2"/>
<evidence type="ECO:0000269" key="3">
    <source>
    </source>
</evidence>
<evidence type="ECO:0000305" key="4"/>
<evidence type="ECO:0007744" key="5">
    <source>
    </source>
</evidence>
<proteinExistence type="evidence at protein level"/>
<reference key="1">
    <citation type="journal article" date="2004" name="Nature">
        <title>Genome sequence of the Brown Norway rat yields insights into mammalian evolution.</title>
        <authorList>
            <person name="Gibbs R.A."/>
            <person name="Weinstock G.M."/>
            <person name="Metzker M.L."/>
            <person name="Muzny D.M."/>
            <person name="Sodergren E.J."/>
            <person name="Scherer S."/>
            <person name="Scott G."/>
            <person name="Steffen D."/>
            <person name="Worley K.C."/>
            <person name="Burch P.E."/>
            <person name="Okwuonu G."/>
            <person name="Hines S."/>
            <person name="Lewis L."/>
            <person name="Deramo C."/>
            <person name="Delgado O."/>
            <person name="Dugan-Rocha S."/>
            <person name="Miner G."/>
            <person name="Morgan M."/>
            <person name="Hawes A."/>
            <person name="Gill R."/>
            <person name="Holt R.A."/>
            <person name="Adams M.D."/>
            <person name="Amanatides P.G."/>
            <person name="Baden-Tillson H."/>
            <person name="Barnstead M."/>
            <person name="Chin S."/>
            <person name="Evans C.A."/>
            <person name="Ferriera S."/>
            <person name="Fosler C."/>
            <person name="Glodek A."/>
            <person name="Gu Z."/>
            <person name="Jennings D."/>
            <person name="Kraft C.L."/>
            <person name="Nguyen T."/>
            <person name="Pfannkoch C.M."/>
            <person name="Sitter C."/>
            <person name="Sutton G.G."/>
            <person name="Venter J.C."/>
            <person name="Woodage T."/>
            <person name="Smith D."/>
            <person name="Lee H.-M."/>
            <person name="Gustafson E."/>
            <person name="Cahill P."/>
            <person name="Kana A."/>
            <person name="Doucette-Stamm L."/>
            <person name="Weinstock K."/>
            <person name="Fechtel K."/>
            <person name="Weiss R.B."/>
            <person name="Dunn D.M."/>
            <person name="Green E.D."/>
            <person name="Blakesley R.W."/>
            <person name="Bouffard G.G."/>
            <person name="De Jong P.J."/>
            <person name="Osoegawa K."/>
            <person name="Zhu B."/>
            <person name="Marra M."/>
            <person name="Schein J."/>
            <person name="Bosdet I."/>
            <person name="Fjell C."/>
            <person name="Jones S."/>
            <person name="Krzywinski M."/>
            <person name="Mathewson C."/>
            <person name="Siddiqui A."/>
            <person name="Wye N."/>
            <person name="McPherson J."/>
            <person name="Zhao S."/>
            <person name="Fraser C.M."/>
            <person name="Shetty J."/>
            <person name="Shatsman S."/>
            <person name="Geer K."/>
            <person name="Chen Y."/>
            <person name="Abramzon S."/>
            <person name="Nierman W.C."/>
            <person name="Havlak P.H."/>
            <person name="Chen R."/>
            <person name="Durbin K.J."/>
            <person name="Egan A."/>
            <person name="Ren Y."/>
            <person name="Song X.-Z."/>
            <person name="Li B."/>
            <person name="Liu Y."/>
            <person name="Qin X."/>
            <person name="Cawley S."/>
            <person name="Cooney A.J."/>
            <person name="D'Souza L.M."/>
            <person name="Martin K."/>
            <person name="Wu J.Q."/>
            <person name="Gonzalez-Garay M.L."/>
            <person name="Jackson A.R."/>
            <person name="Kalafus K.J."/>
            <person name="McLeod M.P."/>
            <person name="Milosavljevic A."/>
            <person name="Virk D."/>
            <person name="Volkov A."/>
            <person name="Wheeler D.A."/>
            <person name="Zhang Z."/>
            <person name="Bailey J.A."/>
            <person name="Eichler E.E."/>
            <person name="Tuzun E."/>
            <person name="Birney E."/>
            <person name="Mongin E."/>
            <person name="Ureta-Vidal A."/>
            <person name="Woodwark C."/>
            <person name="Zdobnov E."/>
            <person name="Bork P."/>
            <person name="Suyama M."/>
            <person name="Torrents D."/>
            <person name="Alexandersson M."/>
            <person name="Trask B.J."/>
            <person name="Young J.M."/>
            <person name="Huang H."/>
            <person name="Wang H."/>
            <person name="Xing H."/>
            <person name="Daniels S."/>
            <person name="Gietzen D."/>
            <person name="Schmidt J."/>
            <person name="Stevens K."/>
            <person name="Vitt U."/>
            <person name="Wingrove J."/>
            <person name="Camara F."/>
            <person name="Mar Alba M."/>
            <person name="Abril J.F."/>
            <person name="Guigo R."/>
            <person name="Smit A."/>
            <person name="Dubchak I."/>
            <person name="Rubin E.M."/>
            <person name="Couronne O."/>
            <person name="Poliakov A."/>
            <person name="Huebner N."/>
            <person name="Ganten D."/>
            <person name="Goesele C."/>
            <person name="Hummel O."/>
            <person name="Kreitler T."/>
            <person name="Lee Y.-A."/>
            <person name="Monti J."/>
            <person name="Schulz H."/>
            <person name="Zimdahl H."/>
            <person name="Himmelbauer H."/>
            <person name="Lehrach H."/>
            <person name="Jacob H.J."/>
            <person name="Bromberg S."/>
            <person name="Gullings-Handley J."/>
            <person name="Jensen-Seaman M.I."/>
            <person name="Kwitek A.E."/>
            <person name="Lazar J."/>
            <person name="Pasko D."/>
            <person name="Tonellato P.J."/>
            <person name="Twigger S."/>
            <person name="Ponting C.P."/>
            <person name="Duarte J.M."/>
            <person name="Rice S."/>
            <person name="Goodstadt L."/>
            <person name="Beatson S.A."/>
            <person name="Emes R.D."/>
            <person name="Winter E.E."/>
            <person name="Webber C."/>
            <person name="Brandt P."/>
            <person name="Nyakatura G."/>
            <person name="Adetobi M."/>
            <person name="Chiaromonte F."/>
            <person name="Elnitski L."/>
            <person name="Eswara P."/>
            <person name="Hardison R.C."/>
            <person name="Hou M."/>
            <person name="Kolbe D."/>
            <person name="Makova K."/>
            <person name="Miller W."/>
            <person name="Nekrutenko A."/>
            <person name="Riemer C."/>
            <person name="Schwartz S."/>
            <person name="Taylor J."/>
            <person name="Yang S."/>
            <person name="Zhang Y."/>
            <person name="Lindpaintner K."/>
            <person name="Andrews T.D."/>
            <person name="Caccamo M."/>
            <person name="Clamp M."/>
            <person name="Clarke L."/>
            <person name="Curwen V."/>
            <person name="Durbin R.M."/>
            <person name="Eyras E."/>
            <person name="Searle S.M."/>
            <person name="Cooper G.M."/>
            <person name="Batzoglou S."/>
            <person name="Brudno M."/>
            <person name="Sidow A."/>
            <person name="Stone E.A."/>
            <person name="Payseur B.A."/>
            <person name="Bourque G."/>
            <person name="Lopez-Otin C."/>
            <person name="Puente X.S."/>
            <person name="Chakrabarti K."/>
            <person name="Chatterji S."/>
            <person name="Dewey C."/>
            <person name="Pachter L."/>
            <person name="Bray N."/>
            <person name="Yap V.B."/>
            <person name="Caspi A."/>
            <person name="Tesler G."/>
            <person name="Pevzner P.A."/>
            <person name="Haussler D."/>
            <person name="Roskin K.M."/>
            <person name="Baertsch R."/>
            <person name="Clawson H."/>
            <person name="Furey T.S."/>
            <person name="Hinrichs A.S."/>
            <person name="Karolchik D."/>
            <person name="Kent W.J."/>
            <person name="Rosenbloom K.R."/>
            <person name="Trumbower H."/>
            <person name="Weirauch M."/>
            <person name="Cooper D.N."/>
            <person name="Stenson P.D."/>
            <person name="Ma B."/>
            <person name="Brent M."/>
            <person name="Arumugam M."/>
            <person name="Shteynberg D."/>
            <person name="Copley R.R."/>
            <person name="Taylor M.S."/>
            <person name="Riethman H."/>
            <person name="Mudunuri U."/>
            <person name="Peterson J."/>
            <person name="Guyer M."/>
            <person name="Felsenfeld A."/>
            <person name="Old S."/>
            <person name="Mockrin S."/>
            <person name="Collins F.S."/>
        </authorList>
    </citation>
    <scope>NUCLEOTIDE SEQUENCE [LARGE SCALE GENOMIC DNA]</scope>
    <source>
        <strain>Brown Norway</strain>
    </source>
</reference>
<reference key="2">
    <citation type="journal article" date="2012" name="Nat. Commun.">
        <title>Quantitative maps of protein phosphorylation sites across 14 different rat organs and tissues.</title>
        <authorList>
            <person name="Lundby A."/>
            <person name="Secher A."/>
            <person name="Lage K."/>
            <person name="Nordsborg N.B."/>
            <person name="Dmytriyev A."/>
            <person name="Lundby C."/>
            <person name="Olsen J.V."/>
        </authorList>
    </citation>
    <scope>PHOSPHORYLATION [LARGE SCALE ANALYSIS] AT SER-274</scope>
    <scope>IDENTIFICATION BY MASS SPECTROMETRY [LARGE SCALE ANALYSIS]</scope>
</reference>
<reference key="3">
    <citation type="journal article" date="2012" name="Neuron">
        <title>High-resolution proteomics unravel architecture and molecular diversity of native AMPA receptor complexes.</title>
        <authorList>
            <person name="Schwenk J."/>
            <person name="Harmel N."/>
            <person name="Brechet A."/>
            <person name="Zolles G."/>
            <person name="Berkefeld H."/>
            <person name="Muller C.S."/>
            <person name="Bildl W."/>
            <person name="Baehrens D."/>
            <person name="Huber B."/>
            <person name="Kulik A."/>
            <person name="Klocker N."/>
            <person name="Schulte U."/>
            <person name="Fakler B."/>
        </authorList>
    </citation>
    <scope>FUNCTION</scope>
    <scope>IDENTIFICATION IN AMPAR COMPLEX</scope>
    <scope>TOPOLOGY</scope>
    <scope>SUBCELLULAR LOCATION</scope>
    <scope>TISSUE SPECIFICITY</scope>
</reference>